<proteinExistence type="inferred from homology"/>
<gene>
    <name evidence="1" type="primary">rutD</name>
    <name type="ordered locus">EC042_1084</name>
</gene>
<sequence>MKLSLSPPPYADAPVVVLISGLGGSGSYWLPQLAVLEQEYQVICYDQRGTGNNPDTLEEDYSIAQMAAELHQALVAAGIERYAVVGHALGALVGMQLALDYPASLTVLVSVNGWLRINAHTRRCFQVREQLLHSGGAQAWVEAQPLFLYPADWMAARAPRLEAEDALALAHFQGKNNLLRRLNALKRADFSRHTDRIRCPVQIICASDDLLVPSACSSELHAALPDSQKMVMRYGGHACNVTDPETFNALLLNGLASLLHHREAACKELL</sequence>
<feature type="chain" id="PRO_0000402958" description="Putative carbamate hydrolase RutD">
    <location>
        <begin position="1"/>
        <end position="270"/>
    </location>
</feature>
<keyword id="KW-0378">Hydrolase</keyword>
<evidence type="ECO:0000255" key="1">
    <source>
        <dbReference type="HAMAP-Rule" id="MF_00832"/>
    </source>
</evidence>
<accession>D3H122</accession>
<dbReference type="EC" id="3.5.1.-" evidence="1"/>
<dbReference type="EMBL" id="FN554766">
    <property type="protein sequence ID" value="CBG33906.1"/>
    <property type="molecule type" value="Genomic_DNA"/>
</dbReference>
<dbReference type="RefSeq" id="WP_000777652.1">
    <property type="nucleotide sequence ID" value="NC_017626.1"/>
</dbReference>
<dbReference type="SMR" id="D3H122"/>
<dbReference type="ESTHER" id="ecoli-rutD">
    <property type="family name" value="RutD"/>
</dbReference>
<dbReference type="KEGG" id="elo:EC042_1084"/>
<dbReference type="PATRIC" id="fig|216592.3.peg.1122"/>
<dbReference type="HOGENOM" id="CLU_020336_50_1_6"/>
<dbReference type="Proteomes" id="UP000001407">
    <property type="component" value="Chromosome"/>
</dbReference>
<dbReference type="GO" id="GO:0016811">
    <property type="term" value="F:hydrolase activity, acting on carbon-nitrogen (but not peptide) bonds, in linear amides"/>
    <property type="evidence" value="ECO:0007669"/>
    <property type="project" value="InterPro"/>
</dbReference>
<dbReference type="GO" id="GO:0019740">
    <property type="term" value="P:nitrogen utilization"/>
    <property type="evidence" value="ECO:0007669"/>
    <property type="project" value="UniProtKB-UniRule"/>
</dbReference>
<dbReference type="GO" id="GO:0006212">
    <property type="term" value="P:uracil catabolic process"/>
    <property type="evidence" value="ECO:0007669"/>
    <property type="project" value="UniProtKB-UniRule"/>
</dbReference>
<dbReference type="Gene3D" id="3.40.50.1820">
    <property type="entry name" value="alpha/beta hydrolase"/>
    <property type="match status" value="1"/>
</dbReference>
<dbReference type="HAMAP" id="MF_00832">
    <property type="entry name" value="RutD"/>
    <property type="match status" value="1"/>
</dbReference>
<dbReference type="InterPro" id="IPR000073">
    <property type="entry name" value="AB_hydrolase_1"/>
</dbReference>
<dbReference type="InterPro" id="IPR029058">
    <property type="entry name" value="AB_hydrolase_fold"/>
</dbReference>
<dbReference type="InterPro" id="IPR050266">
    <property type="entry name" value="AB_hydrolase_sf"/>
</dbReference>
<dbReference type="InterPro" id="IPR019913">
    <property type="entry name" value="Pyrimidine_utilisation_RutD"/>
</dbReference>
<dbReference type="NCBIfam" id="TIGR03611">
    <property type="entry name" value="RutD"/>
    <property type="match status" value="1"/>
</dbReference>
<dbReference type="PANTHER" id="PTHR43798">
    <property type="entry name" value="MONOACYLGLYCEROL LIPASE"/>
    <property type="match status" value="1"/>
</dbReference>
<dbReference type="Pfam" id="PF00561">
    <property type="entry name" value="Abhydrolase_1"/>
    <property type="match status" value="1"/>
</dbReference>
<dbReference type="SUPFAM" id="SSF53474">
    <property type="entry name" value="alpha/beta-Hydrolases"/>
    <property type="match status" value="1"/>
</dbReference>
<reference key="1">
    <citation type="journal article" date="2010" name="PLoS ONE">
        <title>Complete genome sequence and comparative metabolic profiling of the prototypical enteroaggregative Escherichia coli strain 042.</title>
        <authorList>
            <person name="Chaudhuri R.R."/>
            <person name="Sebaihia M."/>
            <person name="Hobman J.L."/>
            <person name="Webber M.A."/>
            <person name="Leyton D.L."/>
            <person name="Goldberg M.D."/>
            <person name="Cunningham A.F."/>
            <person name="Scott-Tucker A."/>
            <person name="Ferguson P.R."/>
            <person name="Thomas C.M."/>
            <person name="Frankel G."/>
            <person name="Tang C.M."/>
            <person name="Dudley E.G."/>
            <person name="Roberts I.S."/>
            <person name="Rasko D.A."/>
            <person name="Pallen M.J."/>
            <person name="Parkhill J."/>
            <person name="Nataro J.P."/>
            <person name="Thomson N.R."/>
            <person name="Henderson I.R."/>
        </authorList>
    </citation>
    <scope>NUCLEOTIDE SEQUENCE [LARGE SCALE GENOMIC DNA]</scope>
    <source>
        <strain>042 / EAEC</strain>
    </source>
</reference>
<name>RUTD_ECO44</name>
<comment type="function">
    <text evidence="1">Involved in pyrimidine catabolism. May facilitate the hydrolysis of carbamate, a reaction that can also occur spontaneously.</text>
</comment>
<comment type="catalytic activity">
    <reaction evidence="1">
        <text>carbamate + 2 H(+) = NH4(+) + CO2</text>
        <dbReference type="Rhea" id="RHEA:15649"/>
        <dbReference type="ChEBI" id="CHEBI:13941"/>
        <dbReference type="ChEBI" id="CHEBI:15378"/>
        <dbReference type="ChEBI" id="CHEBI:16526"/>
        <dbReference type="ChEBI" id="CHEBI:28938"/>
    </reaction>
</comment>
<comment type="similarity">
    <text evidence="1">Belongs to the AB hydrolase superfamily. Hydrolase RutD family.</text>
</comment>
<protein>
    <recommendedName>
        <fullName evidence="1">Putative carbamate hydrolase RutD</fullName>
        <ecNumber evidence="1">3.5.1.-</ecNumber>
    </recommendedName>
    <alternativeName>
        <fullName evidence="1">Aminohydrolase</fullName>
    </alternativeName>
</protein>
<organism>
    <name type="scientific">Escherichia coli O44:H18 (strain 042 / EAEC)</name>
    <dbReference type="NCBI Taxonomy" id="216592"/>
    <lineage>
        <taxon>Bacteria</taxon>
        <taxon>Pseudomonadati</taxon>
        <taxon>Pseudomonadota</taxon>
        <taxon>Gammaproteobacteria</taxon>
        <taxon>Enterobacterales</taxon>
        <taxon>Enterobacteriaceae</taxon>
        <taxon>Escherichia</taxon>
    </lineage>
</organism>